<proteinExistence type="inferred from homology"/>
<reference key="1">
    <citation type="journal article" date="2003" name="Proc. Natl. Acad. Sci. U.S.A.">
        <title>The genome sequence of Clostridium tetani, the causative agent of tetanus disease.</title>
        <authorList>
            <person name="Brueggemann H."/>
            <person name="Baeumer S."/>
            <person name="Fricke W.F."/>
            <person name="Wiezer A."/>
            <person name="Liesegang H."/>
            <person name="Decker I."/>
            <person name="Herzberg C."/>
            <person name="Martinez-Arias R."/>
            <person name="Merkl R."/>
            <person name="Henne A."/>
            <person name="Gottschalk G."/>
        </authorList>
    </citation>
    <scope>NUCLEOTIDE SEQUENCE [LARGE SCALE GENOMIC DNA]</scope>
    <source>
        <strain>Massachusetts / E88</strain>
    </source>
</reference>
<gene>
    <name evidence="1" type="primary">pgi</name>
    <name type="ordered locus">CTC_02404</name>
</gene>
<accession>Q891H2</accession>
<keyword id="KW-0963">Cytoplasm</keyword>
<keyword id="KW-0312">Gluconeogenesis</keyword>
<keyword id="KW-0324">Glycolysis</keyword>
<keyword id="KW-0413">Isomerase</keyword>
<keyword id="KW-1185">Reference proteome</keyword>
<organism>
    <name type="scientific">Clostridium tetani (strain Massachusetts / E88)</name>
    <dbReference type="NCBI Taxonomy" id="212717"/>
    <lineage>
        <taxon>Bacteria</taxon>
        <taxon>Bacillati</taxon>
        <taxon>Bacillota</taxon>
        <taxon>Clostridia</taxon>
        <taxon>Eubacteriales</taxon>
        <taxon>Clostridiaceae</taxon>
        <taxon>Clostridium</taxon>
    </lineage>
</organism>
<comment type="function">
    <text evidence="1">Catalyzes the reversible isomerization of glucose-6-phosphate to fructose-6-phosphate.</text>
</comment>
<comment type="catalytic activity">
    <reaction evidence="1">
        <text>alpha-D-glucose 6-phosphate = beta-D-fructose 6-phosphate</text>
        <dbReference type="Rhea" id="RHEA:11816"/>
        <dbReference type="ChEBI" id="CHEBI:57634"/>
        <dbReference type="ChEBI" id="CHEBI:58225"/>
        <dbReference type="EC" id="5.3.1.9"/>
    </reaction>
</comment>
<comment type="pathway">
    <text evidence="1">Carbohydrate biosynthesis; gluconeogenesis.</text>
</comment>
<comment type="pathway">
    <text evidence="1">Carbohydrate degradation; glycolysis; D-glyceraldehyde 3-phosphate and glycerone phosphate from D-glucose: step 2/4.</text>
</comment>
<comment type="subcellular location">
    <subcellularLocation>
        <location evidence="1">Cytoplasm</location>
    </subcellularLocation>
</comment>
<comment type="similarity">
    <text evidence="1">Belongs to the GPI family.</text>
</comment>
<dbReference type="EC" id="5.3.1.9" evidence="1"/>
<dbReference type="EMBL" id="AE015927">
    <property type="protein sequence ID" value="AAO36873.1"/>
    <property type="molecule type" value="Genomic_DNA"/>
</dbReference>
<dbReference type="RefSeq" id="WP_011100534.1">
    <property type="nucleotide sequence ID" value="NC_004557.1"/>
</dbReference>
<dbReference type="SMR" id="Q891H2"/>
<dbReference type="STRING" id="212717.CTC_02404"/>
<dbReference type="GeneID" id="24254612"/>
<dbReference type="KEGG" id="ctc:CTC_02404"/>
<dbReference type="HOGENOM" id="CLU_037303_0_1_9"/>
<dbReference type="OrthoDB" id="140919at2"/>
<dbReference type="UniPathway" id="UPA00109">
    <property type="reaction ID" value="UER00181"/>
</dbReference>
<dbReference type="UniPathway" id="UPA00138"/>
<dbReference type="Proteomes" id="UP000001412">
    <property type="component" value="Chromosome"/>
</dbReference>
<dbReference type="GO" id="GO:0005829">
    <property type="term" value="C:cytosol"/>
    <property type="evidence" value="ECO:0007669"/>
    <property type="project" value="TreeGrafter"/>
</dbReference>
<dbReference type="GO" id="GO:0097367">
    <property type="term" value="F:carbohydrate derivative binding"/>
    <property type="evidence" value="ECO:0007669"/>
    <property type="project" value="InterPro"/>
</dbReference>
<dbReference type="GO" id="GO:0004347">
    <property type="term" value="F:glucose-6-phosphate isomerase activity"/>
    <property type="evidence" value="ECO:0007669"/>
    <property type="project" value="UniProtKB-UniRule"/>
</dbReference>
<dbReference type="GO" id="GO:0048029">
    <property type="term" value="F:monosaccharide binding"/>
    <property type="evidence" value="ECO:0007669"/>
    <property type="project" value="TreeGrafter"/>
</dbReference>
<dbReference type="GO" id="GO:0006094">
    <property type="term" value="P:gluconeogenesis"/>
    <property type="evidence" value="ECO:0007669"/>
    <property type="project" value="UniProtKB-UniRule"/>
</dbReference>
<dbReference type="GO" id="GO:0051156">
    <property type="term" value="P:glucose 6-phosphate metabolic process"/>
    <property type="evidence" value="ECO:0007669"/>
    <property type="project" value="TreeGrafter"/>
</dbReference>
<dbReference type="GO" id="GO:0006096">
    <property type="term" value="P:glycolytic process"/>
    <property type="evidence" value="ECO:0007669"/>
    <property type="project" value="UniProtKB-UniRule"/>
</dbReference>
<dbReference type="CDD" id="cd05015">
    <property type="entry name" value="SIS_PGI_1"/>
    <property type="match status" value="1"/>
</dbReference>
<dbReference type="CDD" id="cd05016">
    <property type="entry name" value="SIS_PGI_2"/>
    <property type="match status" value="1"/>
</dbReference>
<dbReference type="FunFam" id="3.40.50.10490:FF:000015">
    <property type="entry name" value="Glucose-6-phosphate isomerase"/>
    <property type="match status" value="1"/>
</dbReference>
<dbReference type="FunFam" id="3.40.50.10490:FF:000016">
    <property type="entry name" value="Glucose-6-phosphate isomerase"/>
    <property type="match status" value="1"/>
</dbReference>
<dbReference type="Gene3D" id="3.40.50.10490">
    <property type="entry name" value="Glucose-6-phosphate isomerase like protein, domain 1"/>
    <property type="match status" value="3"/>
</dbReference>
<dbReference type="HAMAP" id="MF_00473">
    <property type="entry name" value="G6P_isomerase"/>
    <property type="match status" value="1"/>
</dbReference>
<dbReference type="InterPro" id="IPR000210">
    <property type="entry name" value="BTB/POZ_dom"/>
</dbReference>
<dbReference type="InterPro" id="IPR001672">
    <property type="entry name" value="G6P_Isomerase"/>
</dbReference>
<dbReference type="InterPro" id="IPR018189">
    <property type="entry name" value="Phosphoglucose_isomerase_CS"/>
</dbReference>
<dbReference type="InterPro" id="IPR046348">
    <property type="entry name" value="SIS_dom_sf"/>
</dbReference>
<dbReference type="InterPro" id="IPR035476">
    <property type="entry name" value="SIS_PGI_1"/>
</dbReference>
<dbReference type="InterPro" id="IPR035482">
    <property type="entry name" value="SIS_PGI_2"/>
</dbReference>
<dbReference type="NCBIfam" id="NF010697">
    <property type="entry name" value="PRK14097.1"/>
    <property type="match status" value="1"/>
</dbReference>
<dbReference type="PANTHER" id="PTHR11469">
    <property type="entry name" value="GLUCOSE-6-PHOSPHATE ISOMERASE"/>
    <property type="match status" value="1"/>
</dbReference>
<dbReference type="PANTHER" id="PTHR11469:SF1">
    <property type="entry name" value="GLUCOSE-6-PHOSPHATE ISOMERASE"/>
    <property type="match status" value="1"/>
</dbReference>
<dbReference type="Pfam" id="PF00342">
    <property type="entry name" value="PGI"/>
    <property type="match status" value="1"/>
</dbReference>
<dbReference type="PRINTS" id="PR00662">
    <property type="entry name" value="G6PISOMERASE"/>
</dbReference>
<dbReference type="SUPFAM" id="SSF53697">
    <property type="entry name" value="SIS domain"/>
    <property type="match status" value="1"/>
</dbReference>
<dbReference type="PROSITE" id="PS00765">
    <property type="entry name" value="P_GLUCOSE_ISOMERASE_1"/>
    <property type="match status" value="1"/>
</dbReference>
<dbReference type="PROSITE" id="PS00174">
    <property type="entry name" value="P_GLUCOSE_ISOMERASE_2"/>
    <property type="match status" value="1"/>
</dbReference>
<dbReference type="PROSITE" id="PS51463">
    <property type="entry name" value="P_GLUCOSE_ISOMERASE_3"/>
    <property type="match status" value="1"/>
</dbReference>
<evidence type="ECO:0000255" key="1">
    <source>
        <dbReference type="HAMAP-Rule" id="MF_00473"/>
    </source>
</evidence>
<protein>
    <recommendedName>
        <fullName evidence="1">Glucose-6-phosphate isomerase</fullName>
        <shortName evidence="1">GPI</shortName>
        <ecNumber evidence="1">5.3.1.9</ecNumber>
    </recommendedName>
    <alternativeName>
        <fullName evidence="1">Phosphoglucose isomerase</fullName>
        <shortName evidence="1">PGI</shortName>
    </alternativeName>
    <alternativeName>
        <fullName evidence="1">Phosphohexose isomerase</fullName>
        <shortName evidence="1">PHI</shortName>
    </alternativeName>
</protein>
<feature type="chain" id="PRO_0000180628" description="Glucose-6-phosphate isomerase">
    <location>
        <begin position="1"/>
        <end position="449"/>
    </location>
</feature>
<feature type="active site" description="Proton donor" evidence="1">
    <location>
        <position position="290"/>
    </location>
</feature>
<feature type="active site" evidence="1">
    <location>
        <position position="311"/>
    </location>
</feature>
<feature type="active site" evidence="1">
    <location>
        <position position="425"/>
    </location>
</feature>
<sequence>MNKITVDLNNTKPYIKDEEIKALEPFIKEAHKMLHEGSGLGNDFIGWLDLPINYDKDEFQRIKKASNKIKANSDILLVIGIGGSYLGARAAIEMLSHNFRSLLKKEDKEGTDIIFVGNSISSTYMAELLEVIKDRDFSINVISKSGTTTEPAIAFRIFKEILENKYGIEEAKNRIFVTTDKSKGALKTSSDKQGYETFVIPDNVGGRYSVLTAVGLLPISVAGINIDEMLKGAYDAREDFMYDNIEENQCYKYVAARNALYNKGKNTEILANFEPSLHYFGEWWKQLYGESEGKEGKGIFPASVSFSTDLHSMGQYIQEGLRIIFETFINIEKPRKDLEIKSEKENLDGLNFLSGKTVDFVNKQAFRGTVLAHNDGEVPCIVINVPEVSPYYFGYLVYFFEKACGISGYILGVNPFDQPGVEAYKKNMFALLGKEGFEDRKKELEKRMN</sequence>
<name>G6PI_CLOTE</name>